<accession>Q9V2R2</accession>
<accession>G8ZFJ0</accession>
<organism>
    <name type="scientific">Pyrococcus abyssi (strain GE5 / Orsay)</name>
    <dbReference type="NCBI Taxonomy" id="272844"/>
    <lineage>
        <taxon>Archaea</taxon>
        <taxon>Methanobacteriati</taxon>
        <taxon>Methanobacteriota</taxon>
        <taxon>Thermococci</taxon>
        <taxon>Thermococcales</taxon>
        <taxon>Thermococcaceae</taxon>
        <taxon>Pyrococcus</taxon>
    </lineage>
</organism>
<name>NADA_PYRAB</name>
<evidence type="ECO:0000255" key="1">
    <source>
        <dbReference type="HAMAP-Rule" id="MF_00568"/>
    </source>
</evidence>
<evidence type="ECO:0000305" key="2"/>
<proteinExistence type="inferred from homology"/>
<sequence>MDIVEEILKLKEERNAVILAHNYQLPEVQDIADFIGDSLELARKATKVDADVIVFAGVDFMAETAKILNPDKTVLLPSRRATCAMANMLKVEHIIEAKRKYPNAPVVLYVNSTAETKAYADVTVTSANAVKIVSKLDADVVIFGPDKNLAHYVAKMTGKKVIPVPPNGHCYVHQKFTIEDVERAKKLYPNAKLMVHPECIPEVQEKADIIVSTGGMIKNACLHDEWVVFTEREMVYRLKKLYPEKKFYPAREDAICIGMKAITLKHIYESLRDMKYKVEVPRDIAEKARRAIERMLEMS</sequence>
<feature type="chain" id="PRO_0000155807" description="Quinolinate synthase">
    <location>
        <begin position="1"/>
        <end position="299"/>
    </location>
</feature>
<feature type="binding site" evidence="1">
    <location>
        <position position="21"/>
    </location>
    <ligand>
        <name>iminosuccinate</name>
        <dbReference type="ChEBI" id="CHEBI:77875"/>
    </ligand>
</feature>
<feature type="binding site" evidence="1">
    <location>
        <position position="38"/>
    </location>
    <ligand>
        <name>iminosuccinate</name>
        <dbReference type="ChEBI" id="CHEBI:77875"/>
    </ligand>
</feature>
<feature type="binding site" evidence="1">
    <location>
        <position position="83"/>
    </location>
    <ligand>
        <name>[4Fe-4S] cluster</name>
        <dbReference type="ChEBI" id="CHEBI:49883"/>
    </ligand>
</feature>
<feature type="binding site" evidence="1">
    <location>
        <begin position="109"/>
        <end position="111"/>
    </location>
    <ligand>
        <name>iminosuccinate</name>
        <dbReference type="ChEBI" id="CHEBI:77875"/>
    </ligand>
</feature>
<feature type="binding site" evidence="1">
    <location>
        <position position="126"/>
    </location>
    <ligand>
        <name>iminosuccinate</name>
        <dbReference type="ChEBI" id="CHEBI:77875"/>
    </ligand>
</feature>
<feature type="binding site" evidence="1">
    <location>
        <position position="170"/>
    </location>
    <ligand>
        <name>[4Fe-4S] cluster</name>
        <dbReference type="ChEBI" id="CHEBI:49883"/>
    </ligand>
</feature>
<feature type="binding site" evidence="1">
    <location>
        <begin position="196"/>
        <end position="198"/>
    </location>
    <ligand>
        <name>iminosuccinate</name>
        <dbReference type="ChEBI" id="CHEBI:77875"/>
    </ligand>
</feature>
<feature type="binding site" evidence="1">
    <location>
        <position position="213"/>
    </location>
    <ligand>
        <name>iminosuccinate</name>
        <dbReference type="ChEBI" id="CHEBI:77875"/>
    </ligand>
</feature>
<feature type="binding site" evidence="1">
    <location>
        <position position="256"/>
    </location>
    <ligand>
        <name>[4Fe-4S] cluster</name>
        <dbReference type="ChEBI" id="CHEBI:49883"/>
    </ligand>
</feature>
<keyword id="KW-0004">4Fe-4S</keyword>
<keyword id="KW-0963">Cytoplasm</keyword>
<keyword id="KW-0408">Iron</keyword>
<keyword id="KW-0411">Iron-sulfur</keyword>
<keyword id="KW-0479">Metal-binding</keyword>
<keyword id="KW-0662">Pyridine nucleotide biosynthesis</keyword>
<keyword id="KW-0808">Transferase</keyword>
<comment type="function">
    <text evidence="1">Catalyzes the condensation of iminoaspartate with dihydroxyacetone phosphate to form quinolinate.</text>
</comment>
<comment type="catalytic activity">
    <reaction evidence="1">
        <text>iminosuccinate + dihydroxyacetone phosphate = quinolinate + phosphate + 2 H2O + H(+)</text>
        <dbReference type="Rhea" id="RHEA:25888"/>
        <dbReference type="ChEBI" id="CHEBI:15377"/>
        <dbReference type="ChEBI" id="CHEBI:15378"/>
        <dbReference type="ChEBI" id="CHEBI:29959"/>
        <dbReference type="ChEBI" id="CHEBI:43474"/>
        <dbReference type="ChEBI" id="CHEBI:57642"/>
        <dbReference type="ChEBI" id="CHEBI:77875"/>
        <dbReference type="EC" id="2.5.1.72"/>
    </reaction>
    <physiologicalReaction direction="left-to-right" evidence="1">
        <dbReference type="Rhea" id="RHEA:25889"/>
    </physiologicalReaction>
</comment>
<comment type="cofactor">
    <cofactor evidence="1">
        <name>[4Fe-4S] cluster</name>
        <dbReference type="ChEBI" id="CHEBI:49883"/>
    </cofactor>
    <text evidence="1">Binds 1 [4Fe-4S] cluster per subunit.</text>
</comment>
<comment type="pathway">
    <text evidence="1">Cofactor biosynthesis; NAD(+) biosynthesis; quinolinate from iminoaspartate: step 1/1.</text>
</comment>
<comment type="subcellular location">
    <subcellularLocation>
        <location evidence="1">Cytoplasm</location>
    </subcellularLocation>
</comment>
<comment type="similarity">
    <text evidence="1">Belongs to the quinolinate synthase family. Type 2 subfamily.</text>
</comment>
<comment type="sequence caution" evidence="2">
    <conflict type="erroneous initiation">
        <sequence resource="EMBL-CDS" id="CAB48936"/>
    </conflict>
    <text>Extended N-terminus.</text>
</comment>
<reference key="1">
    <citation type="journal article" date="2003" name="Mol. Microbiol.">
        <title>An integrated analysis of the genome of the hyperthermophilic archaeon Pyrococcus abyssi.</title>
        <authorList>
            <person name="Cohen G.N."/>
            <person name="Barbe V."/>
            <person name="Flament D."/>
            <person name="Galperin M."/>
            <person name="Heilig R."/>
            <person name="Lecompte O."/>
            <person name="Poch O."/>
            <person name="Prieur D."/>
            <person name="Querellou J."/>
            <person name="Ripp R."/>
            <person name="Thierry J.-C."/>
            <person name="Van der Oost J."/>
            <person name="Weissenbach J."/>
            <person name="Zivanovic Y."/>
            <person name="Forterre P."/>
        </authorList>
    </citation>
    <scope>NUCLEOTIDE SEQUENCE [LARGE SCALE GENOMIC DNA]</scope>
    <source>
        <strain>GE5 / Orsay</strain>
    </source>
</reference>
<reference key="2">
    <citation type="journal article" date="2012" name="Curr. Microbiol.">
        <title>Re-annotation of two hyperthermophilic archaea Pyrococcus abyssi GE5 and Pyrococcus furiosus DSM 3638.</title>
        <authorList>
            <person name="Gao J."/>
            <person name="Wang J."/>
        </authorList>
    </citation>
    <scope>GENOME REANNOTATION</scope>
    <source>
        <strain>GE5 / Orsay</strain>
    </source>
</reference>
<protein>
    <recommendedName>
        <fullName evidence="1">Quinolinate synthase</fullName>
        <ecNumber evidence="1">2.5.1.72</ecNumber>
    </recommendedName>
</protein>
<gene>
    <name evidence="1" type="primary">nadA</name>
    <name type="ordered locus">PYRAB00130</name>
    <name type="ORF">PAB2345</name>
</gene>
<dbReference type="EC" id="2.5.1.72" evidence="1"/>
<dbReference type="EMBL" id="AJ248283">
    <property type="protein sequence ID" value="CAB48936.1"/>
    <property type="status" value="ALT_INIT"/>
    <property type="molecule type" value="Genomic_DNA"/>
</dbReference>
<dbReference type="EMBL" id="HE613800">
    <property type="protein sequence ID" value="CCE69381.1"/>
    <property type="molecule type" value="Genomic_DNA"/>
</dbReference>
<dbReference type="PIR" id="A75186">
    <property type="entry name" value="A75186"/>
</dbReference>
<dbReference type="RefSeq" id="WP_048146454.1">
    <property type="nucleotide sequence ID" value="NC_000868.1"/>
</dbReference>
<dbReference type="SMR" id="Q9V2R2"/>
<dbReference type="STRING" id="272844.PAB2345"/>
<dbReference type="KEGG" id="pab:PAB2345"/>
<dbReference type="PATRIC" id="fig|272844.11.peg.15"/>
<dbReference type="eggNOG" id="arCOG04459">
    <property type="taxonomic scope" value="Archaea"/>
</dbReference>
<dbReference type="HOGENOM" id="CLU_047382_0_0_2"/>
<dbReference type="OrthoDB" id="5931at2157"/>
<dbReference type="UniPathway" id="UPA00253">
    <property type="reaction ID" value="UER00327"/>
</dbReference>
<dbReference type="Proteomes" id="UP000000810">
    <property type="component" value="Chromosome"/>
</dbReference>
<dbReference type="Proteomes" id="UP000009139">
    <property type="component" value="Chromosome"/>
</dbReference>
<dbReference type="GO" id="GO:0005737">
    <property type="term" value="C:cytoplasm"/>
    <property type="evidence" value="ECO:0007669"/>
    <property type="project" value="UniProtKB-SubCell"/>
</dbReference>
<dbReference type="GO" id="GO:0051539">
    <property type="term" value="F:4 iron, 4 sulfur cluster binding"/>
    <property type="evidence" value="ECO:0007669"/>
    <property type="project" value="UniProtKB-KW"/>
</dbReference>
<dbReference type="GO" id="GO:0046872">
    <property type="term" value="F:metal ion binding"/>
    <property type="evidence" value="ECO:0007669"/>
    <property type="project" value="UniProtKB-KW"/>
</dbReference>
<dbReference type="GO" id="GO:0008987">
    <property type="term" value="F:quinolinate synthetase A activity"/>
    <property type="evidence" value="ECO:0007669"/>
    <property type="project" value="UniProtKB-UniRule"/>
</dbReference>
<dbReference type="GO" id="GO:0034628">
    <property type="term" value="P:'de novo' NAD biosynthetic process from L-aspartate"/>
    <property type="evidence" value="ECO:0007669"/>
    <property type="project" value="TreeGrafter"/>
</dbReference>
<dbReference type="Gene3D" id="3.40.50.10800">
    <property type="entry name" value="NadA-like"/>
    <property type="match status" value="3"/>
</dbReference>
<dbReference type="HAMAP" id="MF_00568">
    <property type="entry name" value="NadA_type2"/>
    <property type="match status" value="1"/>
</dbReference>
<dbReference type="InterPro" id="IPR003473">
    <property type="entry name" value="NadA"/>
</dbReference>
<dbReference type="InterPro" id="IPR036094">
    <property type="entry name" value="NadA_sf"/>
</dbReference>
<dbReference type="InterPro" id="IPR023066">
    <property type="entry name" value="Quinolinate_synth_type2"/>
</dbReference>
<dbReference type="NCBIfam" id="TIGR00550">
    <property type="entry name" value="nadA"/>
    <property type="match status" value="1"/>
</dbReference>
<dbReference type="NCBIfam" id="NF006878">
    <property type="entry name" value="PRK09375.1-2"/>
    <property type="match status" value="1"/>
</dbReference>
<dbReference type="PANTHER" id="PTHR30573:SF0">
    <property type="entry name" value="QUINOLINATE SYNTHASE, CHLOROPLASTIC"/>
    <property type="match status" value="1"/>
</dbReference>
<dbReference type="PANTHER" id="PTHR30573">
    <property type="entry name" value="QUINOLINATE SYNTHETASE A"/>
    <property type="match status" value="1"/>
</dbReference>
<dbReference type="Pfam" id="PF02445">
    <property type="entry name" value="NadA"/>
    <property type="match status" value="1"/>
</dbReference>
<dbReference type="SUPFAM" id="SSF142754">
    <property type="entry name" value="NadA-like"/>
    <property type="match status" value="1"/>
</dbReference>